<protein>
    <recommendedName>
        <fullName>Uncharacterized protein ORF40</fullName>
    </recommendedName>
</protein>
<dbReference type="EMBL" id="AY509253">
    <property type="protein sequence ID" value="AAS00931.1"/>
    <property type="molecule type" value="Genomic_DNA"/>
</dbReference>
<dbReference type="RefSeq" id="YP_024584.1">
    <property type="nucleotide sequence ID" value="NC_005881.2"/>
</dbReference>
<dbReference type="KEGG" id="vg:2948229"/>
<dbReference type="Proteomes" id="UP000007021">
    <property type="component" value="Segment"/>
</dbReference>
<reference key="1">
    <citation type="journal article" date="2005" name="J. Gen. Virol.">
        <title>A novel class of herpesvirus with bivalve hosts.</title>
        <authorList>
            <person name="Davison A.J."/>
            <person name="Trus B.L."/>
            <person name="Cheng N."/>
            <person name="Steven A.C."/>
            <person name="Watson M.S."/>
            <person name="Cunningham C."/>
            <person name="Le Deuff R.M."/>
            <person name="Renault T."/>
        </authorList>
    </citation>
    <scope>NUCLEOTIDE SEQUENCE [LARGE SCALE GENOMIC DNA]</scope>
</reference>
<organism>
    <name type="scientific">Ostreid herpesvirus 1 (isolate France)</name>
    <name type="common">OsHV-1</name>
    <name type="synonym">Pacific oyster herpesvirus</name>
    <dbReference type="NCBI Taxonomy" id="654903"/>
    <lineage>
        <taxon>Viruses</taxon>
        <taxon>Duplodnaviria</taxon>
        <taxon>Heunggongvirae</taxon>
        <taxon>Peploviricota</taxon>
        <taxon>Herviviricetes</taxon>
        <taxon>Herpesvirales</taxon>
        <taxon>Malacoherpesviridae</taxon>
        <taxon>Ostreavirus</taxon>
        <taxon>Ostreavirus ostreidmalaco1</taxon>
        <taxon>Ostreid herpesvirus 1</taxon>
    </lineage>
</organism>
<accession>Q6R7I4</accession>
<sequence length="575" mass="65773">MDDEDDFFNFLSEKPTDKEQSMLDDIFKMGNDTEDIFSRLNEFLSNDINLTPNNEETYTNRFNYDASVSLLDNVGRAASFNTYYRDGQEFRSHLHGQVMDDESEHIVASLEEECYKRGNKYFVSDFIYYDTETNSWTPKREELSKIGLEKDIKADVICVDKIKVWTGPRSEHLMSIQNATNSLSGYEKRDSMNKPPKGMFLHEVVKFGDLMGTMARYKRTDNTQSSHPFSENNRTNRTNVNMARGIHEFTLLNRIMMAHNIANNPYGGSSTLISRDSENNNSLTVDSVINSVINGITFKAEACKKEKKGEKKGFSLTQMASFGTHKSVVNFNEQDLEEIANMTEEELALAPLEGAEVQVHEACFNCSAVRGSRILPDMKRKGCQLLEDTKESITSLAVNNGKAKIMKMSNSLAWNSLNTLIDMMCWEANTHKMTREEEMEFFNTEITPALNGLHVSRDNYAQASSFTQQIPKNKFLAEPDIKSVSHKHKSVRTRNIFGQTNIKFKTAHRKVGELNNKKPMTGEKPPPKNKKSPKYKNNTFASQWARNMGIVRFLEFGPRVCRNRCDFREPTEEEI</sequence>
<name>Y040_OSHVF</name>
<organismHost>
    <name type="scientific">Magallana gigas</name>
    <name type="common">Pacific oyster</name>
    <name type="synonym">Crassostrea gigas</name>
    <dbReference type="NCBI Taxonomy" id="29159"/>
</organismHost>
<organismHost>
    <name type="scientific">Pecten maximus</name>
    <name type="common">King scallop</name>
    <name type="synonym">Pilgrim's clam</name>
    <dbReference type="NCBI Taxonomy" id="6579"/>
</organismHost>
<proteinExistence type="predicted"/>
<gene>
    <name type="ORF">ORF40</name>
</gene>
<evidence type="ECO:0000256" key="1">
    <source>
        <dbReference type="SAM" id="MobiDB-lite"/>
    </source>
</evidence>
<keyword id="KW-1185">Reference proteome</keyword>
<feature type="chain" id="PRO_0000385069" description="Uncharacterized protein ORF40">
    <location>
        <begin position="1"/>
        <end position="575"/>
    </location>
</feature>
<feature type="region of interest" description="Disordered" evidence="1">
    <location>
        <begin position="507"/>
        <end position="536"/>
    </location>
</feature>